<proteinExistence type="inferred from homology"/>
<protein>
    <recommendedName>
        <fullName evidence="1">Shikimate kinase 1</fullName>
        <shortName evidence="1">SK 1</shortName>
        <ecNumber evidence="1">2.7.1.71</ecNumber>
    </recommendedName>
</protein>
<reference key="1">
    <citation type="journal article" date="2005" name="Nucleic Acids Res.">
        <title>The genome sequence of Salmonella enterica serovar Choleraesuis, a highly invasive and resistant zoonotic pathogen.</title>
        <authorList>
            <person name="Chiu C.-H."/>
            <person name="Tang P."/>
            <person name="Chu C."/>
            <person name="Hu S."/>
            <person name="Bao Q."/>
            <person name="Yu J."/>
            <person name="Chou Y.-Y."/>
            <person name="Wang H.-S."/>
            <person name="Lee Y.-S."/>
        </authorList>
    </citation>
    <scope>NUCLEOTIDE SEQUENCE [LARGE SCALE GENOMIC DNA]</scope>
    <source>
        <strain>SC-B67</strain>
    </source>
</reference>
<accession>Q57IY7</accession>
<sequence length="173" mass="19470">MAEKRNIFLVGPMGAGKSTIGRQLAQQLNMEFYDSDQEIEKRTGADVGWVFDVEGEDGFRNREEKVINELTEKQGIVLATGGGSVKSRETRNRLSARGVVVYLETTIEKQLARTQRDKKRPLLQVEAPPREVLEALANERNPLYEEIADVTIRTDDQSAKVVANQIIHMLESN</sequence>
<feature type="chain" id="PRO_0000237925" description="Shikimate kinase 1">
    <location>
        <begin position="1"/>
        <end position="173"/>
    </location>
</feature>
<feature type="binding site" evidence="1">
    <location>
        <begin position="14"/>
        <end position="19"/>
    </location>
    <ligand>
        <name>ATP</name>
        <dbReference type="ChEBI" id="CHEBI:30616"/>
    </ligand>
</feature>
<feature type="binding site" evidence="1">
    <location>
        <position position="18"/>
    </location>
    <ligand>
        <name>Mg(2+)</name>
        <dbReference type="ChEBI" id="CHEBI:18420"/>
    </ligand>
</feature>
<feature type="binding site" evidence="1">
    <location>
        <position position="36"/>
    </location>
    <ligand>
        <name>substrate</name>
    </ligand>
</feature>
<feature type="binding site" evidence="1">
    <location>
        <position position="60"/>
    </location>
    <ligand>
        <name>substrate</name>
    </ligand>
</feature>
<feature type="binding site" evidence="1">
    <location>
        <position position="82"/>
    </location>
    <ligand>
        <name>substrate</name>
    </ligand>
</feature>
<feature type="binding site" evidence="1">
    <location>
        <position position="120"/>
    </location>
    <ligand>
        <name>ATP</name>
        <dbReference type="ChEBI" id="CHEBI:30616"/>
    </ligand>
</feature>
<feature type="binding site" evidence="1">
    <location>
        <position position="140"/>
    </location>
    <ligand>
        <name>substrate</name>
    </ligand>
</feature>
<feature type="binding site" evidence="1">
    <location>
        <position position="157"/>
    </location>
    <ligand>
        <name>ATP</name>
        <dbReference type="ChEBI" id="CHEBI:30616"/>
    </ligand>
</feature>
<organism>
    <name type="scientific">Salmonella choleraesuis (strain SC-B67)</name>
    <dbReference type="NCBI Taxonomy" id="321314"/>
    <lineage>
        <taxon>Bacteria</taxon>
        <taxon>Pseudomonadati</taxon>
        <taxon>Pseudomonadota</taxon>
        <taxon>Gammaproteobacteria</taxon>
        <taxon>Enterobacterales</taxon>
        <taxon>Enterobacteriaceae</taxon>
        <taxon>Salmonella</taxon>
    </lineage>
</organism>
<name>AROK_SALCH</name>
<keyword id="KW-0028">Amino-acid biosynthesis</keyword>
<keyword id="KW-0057">Aromatic amino acid biosynthesis</keyword>
<keyword id="KW-0067">ATP-binding</keyword>
<keyword id="KW-0963">Cytoplasm</keyword>
<keyword id="KW-0418">Kinase</keyword>
<keyword id="KW-0460">Magnesium</keyword>
<keyword id="KW-0479">Metal-binding</keyword>
<keyword id="KW-0547">Nucleotide-binding</keyword>
<keyword id="KW-0808">Transferase</keyword>
<comment type="function">
    <text evidence="1">Catalyzes the specific phosphorylation of the 3-hydroxyl group of shikimic acid using ATP as a cosubstrate.</text>
</comment>
<comment type="catalytic activity">
    <reaction evidence="1">
        <text>shikimate + ATP = 3-phosphoshikimate + ADP + H(+)</text>
        <dbReference type="Rhea" id="RHEA:13121"/>
        <dbReference type="ChEBI" id="CHEBI:15378"/>
        <dbReference type="ChEBI" id="CHEBI:30616"/>
        <dbReference type="ChEBI" id="CHEBI:36208"/>
        <dbReference type="ChEBI" id="CHEBI:145989"/>
        <dbReference type="ChEBI" id="CHEBI:456216"/>
        <dbReference type="EC" id="2.7.1.71"/>
    </reaction>
</comment>
<comment type="cofactor">
    <cofactor evidence="1">
        <name>Mg(2+)</name>
        <dbReference type="ChEBI" id="CHEBI:18420"/>
    </cofactor>
    <text evidence="1">Binds 1 Mg(2+) ion per subunit.</text>
</comment>
<comment type="pathway">
    <text evidence="1">Metabolic intermediate biosynthesis; chorismate biosynthesis; chorismate from D-erythrose 4-phosphate and phosphoenolpyruvate: step 5/7.</text>
</comment>
<comment type="subunit">
    <text evidence="1">Monomer.</text>
</comment>
<comment type="subcellular location">
    <subcellularLocation>
        <location evidence="1">Cytoplasm</location>
    </subcellularLocation>
</comment>
<comment type="similarity">
    <text evidence="1">Belongs to the shikimate kinase family.</text>
</comment>
<evidence type="ECO:0000255" key="1">
    <source>
        <dbReference type="HAMAP-Rule" id="MF_00109"/>
    </source>
</evidence>
<gene>
    <name evidence="1" type="primary">aroK</name>
    <name type="ordered locus">SCH_3419</name>
</gene>
<dbReference type="EC" id="2.7.1.71" evidence="1"/>
<dbReference type="EMBL" id="AE017220">
    <property type="protein sequence ID" value="AAX67325.1"/>
    <property type="molecule type" value="Genomic_DNA"/>
</dbReference>
<dbReference type="RefSeq" id="WP_000818621.1">
    <property type="nucleotide sequence ID" value="NC_006905.1"/>
</dbReference>
<dbReference type="SMR" id="Q57IY7"/>
<dbReference type="GeneID" id="66757820"/>
<dbReference type="KEGG" id="sec:SCH_3419"/>
<dbReference type="HOGENOM" id="CLU_057607_2_2_6"/>
<dbReference type="UniPathway" id="UPA00053">
    <property type="reaction ID" value="UER00088"/>
</dbReference>
<dbReference type="Proteomes" id="UP000000538">
    <property type="component" value="Chromosome"/>
</dbReference>
<dbReference type="GO" id="GO:0005829">
    <property type="term" value="C:cytosol"/>
    <property type="evidence" value="ECO:0007669"/>
    <property type="project" value="TreeGrafter"/>
</dbReference>
<dbReference type="GO" id="GO:0005524">
    <property type="term" value="F:ATP binding"/>
    <property type="evidence" value="ECO:0007669"/>
    <property type="project" value="UniProtKB-UniRule"/>
</dbReference>
<dbReference type="GO" id="GO:0000287">
    <property type="term" value="F:magnesium ion binding"/>
    <property type="evidence" value="ECO:0007669"/>
    <property type="project" value="UniProtKB-UniRule"/>
</dbReference>
<dbReference type="GO" id="GO:0004765">
    <property type="term" value="F:shikimate kinase activity"/>
    <property type="evidence" value="ECO:0007669"/>
    <property type="project" value="UniProtKB-UniRule"/>
</dbReference>
<dbReference type="GO" id="GO:0008652">
    <property type="term" value="P:amino acid biosynthetic process"/>
    <property type="evidence" value="ECO:0007669"/>
    <property type="project" value="UniProtKB-KW"/>
</dbReference>
<dbReference type="GO" id="GO:0009073">
    <property type="term" value="P:aromatic amino acid family biosynthetic process"/>
    <property type="evidence" value="ECO:0007669"/>
    <property type="project" value="UniProtKB-KW"/>
</dbReference>
<dbReference type="GO" id="GO:0009423">
    <property type="term" value="P:chorismate biosynthetic process"/>
    <property type="evidence" value="ECO:0007669"/>
    <property type="project" value="UniProtKB-UniRule"/>
</dbReference>
<dbReference type="CDD" id="cd00464">
    <property type="entry name" value="SK"/>
    <property type="match status" value="1"/>
</dbReference>
<dbReference type="FunFam" id="3.40.50.300:FF:000099">
    <property type="entry name" value="Shikimate kinase 1"/>
    <property type="match status" value="1"/>
</dbReference>
<dbReference type="Gene3D" id="3.40.50.300">
    <property type="entry name" value="P-loop containing nucleotide triphosphate hydrolases"/>
    <property type="match status" value="1"/>
</dbReference>
<dbReference type="HAMAP" id="MF_00109">
    <property type="entry name" value="Shikimate_kinase"/>
    <property type="match status" value="1"/>
</dbReference>
<dbReference type="InterPro" id="IPR027417">
    <property type="entry name" value="P-loop_NTPase"/>
</dbReference>
<dbReference type="InterPro" id="IPR031322">
    <property type="entry name" value="Shikimate/glucono_kinase"/>
</dbReference>
<dbReference type="InterPro" id="IPR000623">
    <property type="entry name" value="Shikimate_kinase/TSH1"/>
</dbReference>
<dbReference type="InterPro" id="IPR023000">
    <property type="entry name" value="Shikimate_kinase_CS"/>
</dbReference>
<dbReference type="NCBIfam" id="NF003456">
    <property type="entry name" value="PRK05057.1"/>
    <property type="match status" value="1"/>
</dbReference>
<dbReference type="PANTHER" id="PTHR21087">
    <property type="entry name" value="SHIKIMATE KINASE"/>
    <property type="match status" value="1"/>
</dbReference>
<dbReference type="PANTHER" id="PTHR21087:SF16">
    <property type="entry name" value="SHIKIMATE KINASE 1, CHLOROPLASTIC"/>
    <property type="match status" value="1"/>
</dbReference>
<dbReference type="Pfam" id="PF01202">
    <property type="entry name" value="SKI"/>
    <property type="match status" value="1"/>
</dbReference>
<dbReference type="PRINTS" id="PR01100">
    <property type="entry name" value="SHIKIMTKNASE"/>
</dbReference>
<dbReference type="SUPFAM" id="SSF52540">
    <property type="entry name" value="P-loop containing nucleoside triphosphate hydrolases"/>
    <property type="match status" value="1"/>
</dbReference>
<dbReference type="PROSITE" id="PS01128">
    <property type="entry name" value="SHIKIMATE_KINASE"/>
    <property type="match status" value="1"/>
</dbReference>